<proteinExistence type="evidence at protein level"/>
<keyword id="KW-0597">Phosphoprotein</keyword>
<keyword id="KW-1185">Reference proteome</keyword>
<keyword id="KW-0677">Repeat</keyword>
<keyword id="KW-0853">WD repeat</keyword>
<reference key="1">
    <citation type="journal article" date="1997" name="Nature">
        <title>The nucleotide sequence of Saccharomyces cerevisiae chromosome XIV and its evolutionary implications.</title>
        <authorList>
            <person name="Philippsen P."/>
            <person name="Kleine K."/>
            <person name="Poehlmann R."/>
            <person name="Duesterhoeft A."/>
            <person name="Hamberg K."/>
            <person name="Hegemann J.H."/>
            <person name="Obermaier B."/>
            <person name="Urrestarazu L.A."/>
            <person name="Aert R."/>
            <person name="Albermann K."/>
            <person name="Altmann R."/>
            <person name="Andre B."/>
            <person name="Baladron V."/>
            <person name="Ballesta J.P.G."/>
            <person name="Becam A.-M."/>
            <person name="Beinhauer J.D."/>
            <person name="Boskovic J."/>
            <person name="Buitrago M.J."/>
            <person name="Bussereau F."/>
            <person name="Coster F."/>
            <person name="Crouzet M."/>
            <person name="D'Angelo M."/>
            <person name="Dal Pero F."/>
            <person name="De Antoni A."/>
            <person name="del Rey F."/>
            <person name="Doignon F."/>
            <person name="Domdey H."/>
            <person name="Dubois E."/>
            <person name="Fiedler T.A."/>
            <person name="Fleig U."/>
            <person name="Floeth M."/>
            <person name="Fritz C."/>
            <person name="Gaillardin C."/>
            <person name="Garcia-Cantalejo J.M."/>
            <person name="Glansdorff N."/>
            <person name="Goffeau A."/>
            <person name="Gueldener U."/>
            <person name="Herbert C.J."/>
            <person name="Heumann K."/>
            <person name="Heuss-Neitzel D."/>
            <person name="Hilbert H."/>
            <person name="Hinni K."/>
            <person name="Iraqui Houssaini I."/>
            <person name="Jacquet M."/>
            <person name="Jimenez A."/>
            <person name="Jonniaux J.-L."/>
            <person name="Karpfinger-Hartl L."/>
            <person name="Lanfranchi G."/>
            <person name="Lepingle A."/>
            <person name="Levesque H."/>
            <person name="Lyck R."/>
            <person name="Maftahi M."/>
            <person name="Mallet L."/>
            <person name="Maurer C.T.C."/>
            <person name="Messenguy F."/>
            <person name="Mewes H.-W."/>
            <person name="Moestl D."/>
            <person name="Nasr F."/>
            <person name="Nicaud J.-M."/>
            <person name="Niedenthal R.K."/>
            <person name="Pandolfo D."/>
            <person name="Pierard A."/>
            <person name="Piravandi E."/>
            <person name="Planta R.J."/>
            <person name="Pohl T.M."/>
            <person name="Purnelle B."/>
            <person name="Rebischung C."/>
            <person name="Remacha M.A."/>
            <person name="Revuelta J.L."/>
            <person name="Rinke M."/>
            <person name="Saiz J.E."/>
            <person name="Sartorello F."/>
            <person name="Scherens B."/>
            <person name="Sen-Gupta M."/>
            <person name="Soler-Mira A."/>
            <person name="Urbanus J.H.M."/>
            <person name="Valle G."/>
            <person name="Van Dyck L."/>
            <person name="Verhasselt P."/>
            <person name="Vierendeels F."/>
            <person name="Vissers S."/>
            <person name="Voet M."/>
            <person name="Volckaert G."/>
            <person name="Wach A."/>
            <person name="Wambutt R."/>
            <person name="Wedler H."/>
            <person name="Zollner A."/>
            <person name="Hani J."/>
        </authorList>
    </citation>
    <scope>NUCLEOTIDE SEQUENCE [LARGE SCALE GENOMIC DNA]</scope>
    <source>
        <strain>ATCC 204508 / S288c</strain>
    </source>
</reference>
<reference key="2">
    <citation type="journal article" date="2014" name="G3 (Bethesda)">
        <title>The reference genome sequence of Saccharomyces cerevisiae: Then and now.</title>
        <authorList>
            <person name="Engel S.R."/>
            <person name="Dietrich F.S."/>
            <person name="Fisk D.G."/>
            <person name="Binkley G."/>
            <person name="Balakrishnan R."/>
            <person name="Costanzo M.C."/>
            <person name="Dwight S.S."/>
            <person name="Hitz B.C."/>
            <person name="Karra K."/>
            <person name="Nash R.S."/>
            <person name="Weng S."/>
            <person name="Wong E.D."/>
            <person name="Lloyd P."/>
            <person name="Skrzypek M.S."/>
            <person name="Miyasato S.R."/>
            <person name="Simison M."/>
            <person name="Cherry J.M."/>
        </authorList>
    </citation>
    <scope>GENOME REANNOTATION</scope>
    <source>
        <strain>ATCC 204508 / S288c</strain>
    </source>
</reference>
<reference key="3">
    <citation type="journal article" date="2003" name="Nature">
        <title>Global analysis of protein expression in yeast.</title>
        <authorList>
            <person name="Ghaemmaghami S."/>
            <person name="Huh W.-K."/>
            <person name="Bower K."/>
            <person name="Howson R.W."/>
            <person name="Belle A."/>
            <person name="Dephoure N."/>
            <person name="O'Shea E.K."/>
            <person name="Weissman J.S."/>
        </authorList>
    </citation>
    <scope>LEVEL OF PROTEIN EXPRESSION [LARGE SCALE ANALYSIS]</scope>
</reference>
<reference key="4">
    <citation type="journal article" date="2007" name="J. Proteome Res.">
        <title>Large-scale phosphorylation analysis of alpha-factor-arrested Saccharomyces cerevisiae.</title>
        <authorList>
            <person name="Li X."/>
            <person name="Gerber S.A."/>
            <person name="Rudner A.D."/>
            <person name="Beausoleil S.A."/>
            <person name="Haas W."/>
            <person name="Villen J."/>
            <person name="Elias J.E."/>
            <person name="Gygi S.P."/>
        </authorList>
    </citation>
    <scope>PHOSPHORYLATION [LARGE SCALE ANALYSIS] AT SER-351</scope>
    <scope>IDENTIFICATION BY MASS SPECTROMETRY [LARGE SCALE ANALYSIS]</scope>
    <source>
        <strain>ADR376</strain>
    </source>
</reference>
<reference key="5">
    <citation type="journal article" date="2008" name="Mol. Cell. Proteomics">
        <title>A multidimensional chromatography technology for in-depth phosphoproteome analysis.</title>
        <authorList>
            <person name="Albuquerque C.P."/>
            <person name="Smolka M.B."/>
            <person name="Payne S.H."/>
            <person name="Bafna V."/>
            <person name="Eng J."/>
            <person name="Zhou H."/>
        </authorList>
    </citation>
    <scope>PHOSPHORYLATION [LARGE SCALE ANALYSIS] AT SER-351</scope>
    <scope>IDENTIFICATION BY MASS SPECTROMETRY [LARGE SCALE ANALYSIS]</scope>
</reference>
<reference key="6">
    <citation type="journal article" date="2009" name="Science">
        <title>Global analysis of Cdk1 substrate phosphorylation sites provides insights into evolution.</title>
        <authorList>
            <person name="Holt L.J."/>
            <person name="Tuch B.B."/>
            <person name="Villen J."/>
            <person name="Johnson A.D."/>
            <person name="Gygi S.P."/>
            <person name="Morgan D.O."/>
        </authorList>
    </citation>
    <scope>PHOSPHORYLATION [LARGE SCALE ANALYSIS] AT SER-351</scope>
    <scope>IDENTIFICATION BY MASS SPECTROMETRY [LARGE SCALE ANALYSIS]</scope>
</reference>
<protein>
    <recommendedName>
        <fullName>Uncharacterized WD repeat-containing protein YNL035C</fullName>
    </recommendedName>
</protein>
<comment type="miscellaneous">
    <text evidence="2">Present with 3970 molecules/cell in log phase SD medium.</text>
</comment>
<evidence type="ECO:0000256" key="1">
    <source>
        <dbReference type="SAM" id="MobiDB-lite"/>
    </source>
</evidence>
<evidence type="ECO:0000269" key="2">
    <source>
    </source>
</evidence>
<evidence type="ECO:0007744" key="3">
    <source>
    </source>
</evidence>
<evidence type="ECO:0007744" key="4">
    <source>
    </source>
</evidence>
<evidence type="ECO:0007744" key="5">
    <source>
    </source>
</evidence>
<organism>
    <name type="scientific">Saccharomyces cerevisiae (strain ATCC 204508 / S288c)</name>
    <name type="common">Baker's yeast</name>
    <dbReference type="NCBI Taxonomy" id="559292"/>
    <lineage>
        <taxon>Eukaryota</taxon>
        <taxon>Fungi</taxon>
        <taxon>Dikarya</taxon>
        <taxon>Ascomycota</taxon>
        <taxon>Saccharomycotina</taxon>
        <taxon>Saccharomycetes</taxon>
        <taxon>Saccharomycetales</taxon>
        <taxon>Saccharomycetaceae</taxon>
        <taxon>Saccharomyces</taxon>
    </lineage>
</organism>
<dbReference type="EMBL" id="Z71311">
    <property type="protein sequence ID" value="CAA95900.1"/>
    <property type="molecule type" value="Genomic_DNA"/>
</dbReference>
<dbReference type="EMBL" id="BK006947">
    <property type="protein sequence ID" value="DAA10510.1"/>
    <property type="molecule type" value="Genomic_DNA"/>
</dbReference>
<dbReference type="PIR" id="S62957">
    <property type="entry name" value="S62957"/>
</dbReference>
<dbReference type="RefSeq" id="NP_014363.1">
    <property type="nucleotide sequence ID" value="NM_001182874.1"/>
</dbReference>
<dbReference type="SMR" id="P53962"/>
<dbReference type="BioGRID" id="35791">
    <property type="interactions" value="61"/>
</dbReference>
<dbReference type="DIP" id="DIP-6372N"/>
<dbReference type="FunCoup" id="P53962">
    <property type="interactions" value="882"/>
</dbReference>
<dbReference type="IntAct" id="P53962">
    <property type="interactions" value="3"/>
</dbReference>
<dbReference type="MINT" id="P53962"/>
<dbReference type="STRING" id="4932.YNL035C"/>
<dbReference type="iPTMnet" id="P53962"/>
<dbReference type="PaxDb" id="4932-YNL035C"/>
<dbReference type="PeptideAtlas" id="P53962"/>
<dbReference type="EnsemblFungi" id="YNL035C_mRNA">
    <property type="protein sequence ID" value="YNL035C"/>
    <property type="gene ID" value="YNL035C"/>
</dbReference>
<dbReference type="GeneID" id="855695"/>
<dbReference type="KEGG" id="sce:YNL035C"/>
<dbReference type="AGR" id="SGD:S000004980"/>
<dbReference type="SGD" id="S000004980">
    <property type="gene designation" value="YNL035C"/>
</dbReference>
<dbReference type="VEuPathDB" id="FungiDB:YNL035C"/>
<dbReference type="eggNOG" id="KOG1188">
    <property type="taxonomic scope" value="Eukaryota"/>
</dbReference>
<dbReference type="GeneTree" id="ENSGT00390000006996"/>
<dbReference type="HOGENOM" id="CLU_037323_3_1_1"/>
<dbReference type="InParanoid" id="P53962"/>
<dbReference type="OMA" id="SIHSCGW"/>
<dbReference type="OrthoDB" id="25131at2759"/>
<dbReference type="BioCyc" id="YEAST:G3O-33072-MONOMER"/>
<dbReference type="BioGRID-ORCS" id="855695">
    <property type="hits" value="5 hits in 10 CRISPR screens"/>
</dbReference>
<dbReference type="PRO" id="PR:P53962"/>
<dbReference type="Proteomes" id="UP000002311">
    <property type="component" value="Chromosome XIV"/>
</dbReference>
<dbReference type="RNAct" id="P53962">
    <property type="molecule type" value="protein"/>
</dbReference>
<dbReference type="GO" id="GO:0005829">
    <property type="term" value="C:cytosol"/>
    <property type="evidence" value="ECO:0000314"/>
    <property type="project" value="SGD"/>
</dbReference>
<dbReference type="GO" id="GO:0005634">
    <property type="term" value="C:nucleus"/>
    <property type="evidence" value="ECO:0000314"/>
    <property type="project" value="SGD"/>
</dbReference>
<dbReference type="FunFam" id="2.130.10.10:FF:001178">
    <property type="entry name" value="YNL035C-like protein"/>
    <property type="match status" value="1"/>
</dbReference>
<dbReference type="Gene3D" id="2.130.10.10">
    <property type="entry name" value="YVTN repeat-like/Quinoprotein amine dehydrogenase"/>
    <property type="match status" value="1"/>
</dbReference>
<dbReference type="InterPro" id="IPR015943">
    <property type="entry name" value="WD40/YVTN_repeat-like_dom_sf"/>
</dbReference>
<dbReference type="InterPro" id="IPR036322">
    <property type="entry name" value="WD40_repeat_dom_sf"/>
</dbReference>
<dbReference type="InterPro" id="IPR001680">
    <property type="entry name" value="WD40_rpt"/>
</dbReference>
<dbReference type="InterPro" id="IPR039328">
    <property type="entry name" value="WDR89"/>
</dbReference>
<dbReference type="PANTHER" id="PTHR22889">
    <property type="entry name" value="WD REPEAT-CONTAINING PROTEIN 89"/>
    <property type="match status" value="1"/>
</dbReference>
<dbReference type="PANTHER" id="PTHR22889:SF0">
    <property type="entry name" value="WD REPEAT-CONTAINING PROTEIN 89"/>
    <property type="match status" value="1"/>
</dbReference>
<dbReference type="Pfam" id="PF00400">
    <property type="entry name" value="WD40"/>
    <property type="match status" value="2"/>
</dbReference>
<dbReference type="SMART" id="SM00320">
    <property type="entry name" value="WD40"/>
    <property type="match status" value="4"/>
</dbReference>
<dbReference type="SUPFAM" id="SSF50978">
    <property type="entry name" value="WD40 repeat-like"/>
    <property type="match status" value="1"/>
</dbReference>
<dbReference type="PROSITE" id="PS00678">
    <property type="entry name" value="WD_REPEATS_1"/>
    <property type="match status" value="1"/>
</dbReference>
<dbReference type="PROSITE" id="PS50082">
    <property type="entry name" value="WD_REPEATS_2"/>
    <property type="match status" value="1"/>
</dbReference>
<dbReference type="PROSITE" id="PS50294">
    <property type="entry name" value="WD_REPEATS_REGION"/>
    <property type="match status" value="1"/>
</dbReference>
<gene>
    <name type="ordered locus">YNL035C</name>
    <name type="ORF">N2730</name>
</gene>
<name>YND5_YEAST</name>
<feature type="chain" id="PRO_0000051485" description="Uncharacterized WD repeat-containing protein YNL035C">
    <location>
        <begin position="1"/>
        <end position="389"/>
    </location>
</feature>
<feature type="repeat" description="WD 1">
    <location>
        <begin position="11"/>
        <end position="53"/>
    </location>
</feature>
<feature type="repeat" description="WD 2">
    <location>
        <begin position="146"/>
        <end position="186"/>
    </location>
</feature>
<feature type="repeat" description="WD 3">
    <location>
        <begin position="289"/>
        <end position="330"/>
    </location>
</feature>
<feature type="region of interest" description="Disordered" evidence="1">
    <location>
        <begin position="361"/>
        <end position="389"/>
    </location>
</feature>
<feature type="compositionally biased region" description="Basic residues" evidence="1">
    <location>
        <begin position="368"/>
        <end position="389"/>
    </location>
</feature>
<feature type="modified residue" description="Phosphoserine" evidence="3 4 5">
    <location>
        <position position="351"/>
    </location>
</feature>
<accession>P53962</accession>
<accession>D6W1E4</accession>
<sequence>MASYSLVESNSFGSENWCLKLQPSYKHGLLTGLSNGEIRLLDWSTGKSVQKIKASETAINDMKVIGSDFSAGHLVSSASIDAVKVFDIRTNDRIAQIQNEANSPFISLDSRHGLLACGTELQGIDAAVYIYDIRKWDTPLRSLIDSHHDDVTCIKFHPSDVNILLSGSTDGYTNIYDLKQDEEEDALHQVINYASIHSCGWLSPKRIFTLSHMETFAIHELNDKSDELKEPQPLDFGDVREIWNCDYVVDIYPGLIATGKTQENCGELCLLPFKDEKVDTENGIVIPHAHGDEVVRDIFIPAQHSNMLYSCGEDGCVKIWENKQGPLDIPENFWDYSKKMNVLGDDDREGSINLDEPLIIQKESVSTRPRKEKHKKAKKHSMKSRFKPY</sequence>